<sequence>MDSNNTEFKDNYQHIPDDIPLTNIKLPNEWVLYLYDKQLFKKMANRPNFQAKPHKALCTISTVNDLLYIMELMKVNNDPKIKSVETDGKINLDANDYIIMRKGIEPIWEDPRNSNGGTFTVKMDHSKGYDVWKIFIQYILGETLTSEISDMKSINGITVSYISDSYNFQNPASKNTLGNTLGNSLGNSLGNGLGNSFTYIKIWDGKPDRTRDQFVSMLPATIIDKIKSDSLMYSQNSKKKHFNEKNIIGKLNSGRKPSNTRGGFSSFGNKRY</sequence>
<accession>Q5UQG4</accession>
<keyword id="KW-0396">Initiation factor</keyword>
<keyword id="KW-0648">Protein biosynthesis</keyword>
<keyword id="KW-1185">Reference proteome</keyword>
<keyword id="KW-0694">RNA-binding</keyword>
<keyword id="KW-0810">Translation regulation</keyword>
<gene>
    <name type="ordered locus">MIMI_L496</name>
</gene>
<dbReference type="EMBL" id="AY653733">
    <property type="protein sequence ID" value="AAV50761.1"/>
    <property type="molecule type" value="Genomic_DNA"/>
</dbReference>
<dbReference type="SMR" id="Q5UQG4"/>
<dbReference type="KEGG" id="vg:9925126"/>
<dbReference type="OrthoDB" id="11882at10239"/>
<dbReference type="Proteomes" id="UP000001134">
    <property type="component" value="Genome"/>
</dbReference>
<dbReference type="GO" id="GO:0000340">
    <property type="term" value="F:RNA 7-methylguanosine cap binding"/>
    <property type="evidence" value="ECO:0007669"/>
    <property type="project" value="TreeGrafter"/>
</dbReference>
<dbReference type="GO" id="GO:0006417">
    <property type="term" value="P:regulation of translation"/>
    <property type="evidence" value="ECO:0007669"/>
    <property type="project" value="UniProtKB-KW"/>
</dbReference>
<dbReference type="Gene3D" id="3.30.760.10">
    <property type="entry name" value="RNA Cap, Translation Initiation Factor Eif4e"/>
    <property type="match status" value="1"/>
</dbReference>
<dbReference type="InterPro" id="IPR023398">
    <property type="entry name" value="TIF_eIF4e-like"/>
</dbReference>
<dbReference type="InterPro" id="IPR001040">
    <property type="entry name" value="TIF_eIF_4E"/>
</dbReference>
<dbReference type="PANTHER" id="PTHR11960">
    <property type="entry name" value="EUKARYOTIC TRANSLATION INITIATION FACTOR 4E RELATED"/>
    <property type="match status" value="1"/>
</dbReference>
<dbReference type="Pfam" id="PF01652">
    <property type="entry name" value="IF4E"/>
    <property type="match status" value="1"/>
</dbReference>
<dbReference type="SUPFAM" id="SSF55418">
    <property type="entry name" value="eIF4e-like"/>
    <property type="match status" value="1"/>
</dbReference>
<comment type="function">
    <text evidence="1">Recognizes and binds the 7-methylguanosine-containing mRNA cap during an early step in the initiation of protein synthesis and facilitates ribosome binding by inducing the unwinding of the mRNAs secondary structures.</text>
</comment>
<comment type="similarity">
    <text evidence="3">Belongs to the eukaryotic initiation factor 4E family.</text>
</comment>
<proteinExistence type="inferred from homology"/>
<name>IF4EH_MIMIV</name>
<evidence type="ECO:0000250" key="1"/>
<evidence type="ECO:0000256" key="2">
    <source>
        <dbReference type="SAM" id="MobiDB-lite"/>
    </source>
</evidence>
<evidence type="ECO:0000305" key="3"/>
<organism>
    <name type="scientific">Acanthamoeba polyphaga mimivirus</name>
    <name type="common">APMV</name>
    <dbReference type="NCBI Taxonomy" id="212035"/>
    <lineage>
        <taxon>Viruses</taxon>
        <taxon>Varidnaviria</taxon>
        <taxon>Bamfordvirae</taxon>
        <taxon>Nucleocytoviricota</taxon>
        <taxon>Megaviricetes</taxon>
        <taxon>Imitervirales</taxon>
        <taxon>Mimiviridae</taxon>
        <taxon>Megamimivirinae</taxon>
        <taxon>Mimivirus</taxon>
        <taxon>Mimivirus bradfordmassiliense</taxon>
    </lineage>
</organism>
<protein>
    <recommendedName>
        <fullName>Eukaryotic translation initiation factor 4E homolog</fullName>
        <shortName>eIF-4E</shortName>
        <shortName>eIF4E</shortName>
    </recommendedName>
    <alternativeName>
        <fullName>mRNA cap-binding protein</fullName>
    </alternativeName>
</protein>
<organismHost>
    <name type="scientific">Acanthamoeba polyphaga</name>
    <name type="common">Amoeba</name>
    <dbReference type="NCBI Taxonomy" id="5757"/>
</organismHost>
<feature type="chain" id="PRO_0000193667" description="Eukaryotic translation initiation factor 4E homolog">
    <location>
        <begin position="1"/>
        <end position="272"/>
    </location>
</feature>
<feature type="region of interest" description="Disordered" evidence="2">
    <location>
        <begin position="249"/>
        <end position="272"/>
    </location>
</feature>
<feature type="compositionally biased region" description="Polar residues" evidence="2">
    <location>
        <begin position="255"/>
        <end position="272"/>
    </location>
</feature>
<reference key="1">
    <citation type="journal article" date="2004" name="Science">
        <title>The 1.2-megabase genome sequence of Mimivirus.</title>
        <authorList>
            <person name="Raoult D."/>
            <person name="Audic S."/>
            <person name="Robert C."/>
            <person name="Abergel C."/>
            <person name="Renesto P."/>
            <person name="Ogata H."/>
            <person name="La Scola B."/>
            <person name="Susan M."/>
            <person name="Claverie J.-M."/>
        </authorList>
    </citation>
    <scope>NUCLEOTIDE SEQUENCE [LARGE SCALE GENOMIC DNA]</scope>
    <source>
        <strain>Rowbotham-Bradford</strain>
    </source>
</reference>